<evidence type="ECO:0000250" key="1">
    <source>
        <dbReference type="UniProtKB" id="P12807"/>
    </source>
</evidence>
<evidence type="ECO:0000250" key="2">
    <source>
        <dbReference type="UniProtKB" id="P46883"/>
    </source>
</evidence>
<evidence type="ECO:0000255" key="3"/>
<evidence type="ECO:0000256" key="4">
    <source>
        <dbReference type="SAM" id="MobiDB-lite"/>
    </source>
</evidence>
<evidence type="ECO:0000269" key="5">
    <source>
    </source>
</evidence>
<evidence type="ECO:0000305" key="6"/>
<evidence type="ECO:0007744" key="7">
    <source>
        <dbReference type="PDB" id="1KSI"/>
    </source>
</evidence>
<evidence type="ECO:0007829" key="8">
    <source>
        <dbReference type="PDB" id="1KSI"/>
    </source>
</evidence>
<evidence type="ECO:0007829" key="9">
    <source>
        <dbReference type="PDB" id="1W2Z"/>
    </source>
</evidence>
<sequence length="674" mass="76358">MASTTTMRLALFSVLTLLSFHAVVSVTPLHVQHPLDPLTKEEFLAVQTIVQNKYPISNNRLAFHYIGLDDPEKDHVLRYETHPTLVSIPRKIFVVAIINSQTHEILINLRIRSIVSDNIHNGYGFPILSVDEQSLAIKLPLKYPPFIDSVKKRGLNLSEIVCSSFTMGWFGEEKNVRTVRLDCFMKESTVNIYVRPITGITIVADLDLMKIVEYHDRDIEAVPTAENTEYQVSKQSPPFGPKQHSLTSHQPQGPGFQINGHSVSWANWKFHIGFDVRAGIVISLASIYDLEKHKSRRVLYKGYISELFVPYQDPTEEFYFKTFFDSGEFGFGLSTVSLIPNRDCPPHAQFIDTYVHSANGTPILLKNAICVFEQYGNIMWRHTENGIPNESIEESRTEVNLIVRTIVTVGNYDNVIDWEFKASGSIKPSIALSGILEIKGTNIKHKDEIKEDLHGKLVSANSIGIYHDHFYIYYLDFDIDGTHNSFEKTSLKTVRIKDGSSKRKSYWTTETQTAKTESDAKITIGLAPAELVVVNPNIKTAVGNEVGYRLIPAIPAHPLLTEDDYPQIRGAFTNYNVWVTAYNRTEKWAGGLYVDHSRGDDTLAVWTKQNREIVNKDIVMWHVVGIHHVPAQEDFPIMPLLSTSFELRPTNFFERNPVLKTLSPRDVAWPGCSN</sequence>
<feature type="signal peptide" evidence="3">
    <location>
        <begin position="1"/>
        <end position="25"/>
    </location>
</feature>
<feature type="chain" id="PRO_0000035680" description="Primary amine oxidase">
    <location>
        <begin position="26"/>
        <end position="674"/>
    </location>
</feature>
<feature type="region of interest" description="Disordered" evidence="4">
    <location>
        <begin position="226"/>
        <end position="251"/>
    </location>
</feature>
<feature type="compositionally biased region" description="Polar residues" evidence="4">
    <location>
        <begin position="226"/>
        <end position="236"/>
    </location>
</feature>
<feature type="active site" description="Proton acceptor" evidence="1">
    <location>
        <position position="325"/>
    </location>
</feature>
<feature type="active site" description="Schiff-base intermediate with substrate; via topaquinone" evidence="1">
    <location>
        <position position="412"/>
    </location>
</feature>
<feature type="binding site" evidence="1">
    <location>
        <begin position="323"/>
        <end position="334"/>
    </location>
    <ligand>
        <name>substrate</name>
    </ligand>
</feature>
<feature type="binding site" evidence="2">
    <location>
        <begin position="409"/>
        <end position="414"/>
    </location>
    <ligand>
        <name>substrate</name>
    </ligand>
</feature>
<feature type="binding site" evidence="5 7">
    <location>
        <position position="467"/>
    </location>
    <ligand>
        <name>Cu cation</name>
        <dbReference type="ChEBI" id="CHEBI:23378"/>
    </ligand>
</feature>
<feature type="binding site" evidence="5 7">
    <location>
        <position position="469"/>
    </location>
    <ligand>
        <name>Cu cation</name>
        <dbReference type="ChEBI" id="CHEBI:23378"/>
    </ligand>
</feature>
<feature type="binding site" evidence="5 7">
    <location>
        <position position="476"/>
    </location>
    <ligand>
        <name>Mn(2+)</name>
        <dbReference type="ChEBI" id="CHEBI:29035"/>
    </ligand>
</feature>
<feature type="binding site" evidence="5 7">
    <location>
        <position position="477"/>
    </location>
    <ligand>
        <name>Mn(2+)</name>
        <dbReference type="ChEBI" id="CHEBI:29035"/>
    </ligand>
</feature>
<feature type="binding site" evidence="5 7">
    <location>
        <position position="478"/>
    </location>
    <ligand>
        <name>Mn(2+)</name>
        <dbReference type="ChEBI" id="CHEBI:29035"/>
    </ligand>
</feature>
<feature type="binding site" evidence="5 7">
    <location>
        <position position="617"/>
    </location>
    <ligand>
        <name>Mn(2+)</name>
        <dbReference type="ChEBI" id="CHEBI:29035"/>
    </ligand>
</feature>
<feature type="binding site" evidence="5 7">
    <location>
        <position position="618"/>
    </location>
    <ligand>
        <name>Mn(2+)</name>
        <dbReference type="ChEBI" id="CHEBI:29035"/>
    </ligand>
</feature>
<feature type="binding site" evidence="5 7">
    <location>
        <position position="628"/>
    </location>
    <ligand>
        <name>Cu cation</name>
        <dbReference type="ChEBI" id="CHEBI:23378"/>
    </ligand>
</feature>
<feature type="modified residue" description="2',4',5'-topaquinone" evidence="5 7">
    <location>
        <position position="412"/>
    </location>
</feature>
<feature type="glycosylation site" description="N-linked (GlcNAc...) asparagine" evidence="5 7">
    <location>
        <position position="156"/>
    </location>
</feature>
<feature type="glycosylation site" description="N-linked (GlcNAc...) asparagine" evidence="6">
    <location>
        <position position="389"/>
    </location>
</feature>
<feature type="disulfide bond" evidence="5 7">
    <location>
        <begin position="162"/>
        <end position="183"/>
    </location>
</feature>
<feature type="disulfide bond" evidence="5 7">
    <location>
        <begin position="344"/>
        <end position="370"/>
    </location>
</feature>
<feature type="helix" evidence="8">
    <location>
        <begin position="40"/>
        <end position="53"/>
    </location>
</feature>
<feature type="turn" evidence="8">
    <location>
        <begin position="56"/>
        <end position="58"/>
    </location>
</feature>
<feature type="strand" evidence="8">
    <location>
        <begin position="61"/>
        <end position="68"/>
    </location>
</feature>
<feature type="helix" evidence="8">
    <location>
        <begin position="73"/>
        <end position="81"/>
    </location>
</feature>
<feature type="helix" evidence="8">
    <location>
        <begin position="83"/>
        <end position="85"/>
    </location>
</feature>
<feature type="strand" evidence="8">
    <location>
        <begin position="91"/>
        <end position="98"/>
    </location>
</feature>
<feature type="strand" evidence="8">
    <location>
        <begin position="101"/>
        <end position="108"/>
    </location>
</feature>
<feature type="turn" evidence="8">
    <location>
        <begin position="109"/>
        <end position="112"/>
    </location>
</feature>
<feature type="strand" evidence="8">
    <location>
        <begin position="113"/>
        <end position="119"/>
    </location>
</feature>
<feature type="helix" evidence="8">
    <location>
        <begin position="130"/>
        <end position="136"/>
    </location>
</feature>
<feature type="helix" evidence="8">
    <location>
        <begin position="137"/>
        <end position="142"/>
    </location>
</feature>
<feature type="helix" evidence="8">
    <location>
        <begin position="144"/>
        <end position="152"/>
    </location>
</feature>
<feature type="helix" evidence="8">
    <location>
        <begin position="157"/>
        <end position="159"/>
    </location>
</feature>
<feature type="strand" evidence="8">
    <location>
        <begin position="160"/>
        <end position="165"/>
    </location>
</feature>
<feature type="strand" evidence="8">
    <location>
        <begin position="178"/>
        <end position="185"/>
    </location>
</feature>
<feature type="helix" evidence="8">
    <location>
        <begin position="192"/>
        <end position="194"/>
    </location>
</feature>
<feature type="strand" evidence="8">
    <location>
        <begin position="195"/>
        <end position="197"/>
    </location>
</feature>
<feature type="strand" evidence="8">
    <location>
        <begin position="199"/>
        <end position="205"/>
    </location>
</feature>
<feature type="turn" evidence="8">
    <location>
        <begin position="206"/>
        <end position="209"/>
    </location>
</feature>
<feature type="strand" evidence="8">
    <location>
        <begin position="210"/>
        <end position="216"/>
    </location>
</feature>
<feature type="helix" evidence="9">
    <location>
        <begin position="232"/>
        <end position="234"/>
    </location>
</feature>
<feature type="strand" evidence="8">
    <location>
        <begin position="246"/>
        <end position="249"/>
    </location>
</feature>
<feature type="strand" evidence="8">
    <location>
        <begin position="257"/>
        <end position="259"/>
    </location>
</feature>
<feature type="strand" evidence="8">
    <location>
        <begin position="262"/>
        <end position="265"/>
    </location>
</feature>
<feature type="strand" evidence="8">
    <location>
        <begin position="268"/>
        <end position="275"/>
    </location>
</feature>
<feature type="turn" evidence="8">
    <location>
        <begin position="276"/>
        <end position="278"/>
    </location>
</feature>
<feature type="strand" evidence="8">
    <location>
        <begin position="279"/>
        <end position="289"/>
    </location>
</feature>
<feature type="turn" evidence="8">
    <location>
        <begin position="290"/>
        <end position="293"/>
    </location>
</feature>
<feature type="strand" evidence="8">
    <location>
        <begin position="294"/>
        <end position="311"/>
    </location>
</feature>
<feature type="turn" evidence="8">
    <location>
        <begin position="316"/>
        <end position="320"/>
    </location>
</feature>
<feature type="helix" evidence="8">
    <location>
        <begin position="325"/>
        <end position="329"/>
    </location>
</feature>
<feature type="turn" evidence="8">
    <location>
        <begin position="331"/>
        <end position="334"/>
    </location>
</feature>
<feature type="turn" evidence="8">
    <location>
        <begin position="340"/>
        <end position="342"/>
    </location>
</feature>
<feature type="strand" evidence="8">
    <location>
        <begin position="349"/>
        <end position="356"/>
    </location>
</feature>
<feature type="strand" evidence="8">
    <location>
        <begin position="362"/>
        <end position="384"/>
    </location>
</feature>
<feature type="strand" evidence="8">
    <location>
        <begin position="392"/>
        <end position="409"/>
    </location>
</feature>
<feature type="strand" evidence="8">
    <location>
        <begin position="412"/>
        <end position="420"/>
    </location>
</feature>
<feature type="strand" evidence="8">
    <location>
        <begin position="426"/>
        <end position="434"/>
    </location>
</feature>
<feature type="strand" evidence="8">
    <location>
        <begin position="438"/>
        <end position="440"/>
    </location>
</feature>
<feature type="helix" evidence="8">
    <location>
        <begin position="446"/>
        <end position="448"/>
    </location>
</feature>
<feature type="strand" evidence="8">
    <location>
        <begin position="454"/>
        <end position="459"/>
    </location>
</feature>
<feature type="strand" evidence="8">
    <location>
        <begin position="462"/>
        <end position="465"/>
    </location>
</feature>
<feature type="strand" evidence="8">
    <location>
        <begin position="467"/>
        <end position="477"/>
    </location>
</feature>
<feature type="strand" evidence="8">
    <location>
        <begin position="484"/>
        <end position="495"/>
    </location>
</feature>
<feature type="strand" evidence="9">
    <location>
        <begin position="498"/>
        <end position="500"/>
    </location>
</feature>
<feature type="strand" evidence="8">
    <location>
        <begin position="504"/>
        <end position="513"/>
    </location>
</feature>
<feature type="helix" evidence="8">
    <location>
        <begin position="517"/>
        <end position="520"/>
    </location>
</feature>
<feature type="strand" evidence="8">
    <location>
        <begin position="529"/>
        <end position="539"/>
    </location>
</feature>
<feature type="strand" evidence="8">
    <location>
        <begin position="545"/>
        <end position="551"/>
    </location>
</feature>
<feature type="helix" evidence="8">
    <location>
        <begin position="565"/>
        <end position="569"/>
    </location>
</feature>
<feature type="helix" evidence="8">
    <location>
        <begin position="571"/>
        <end position="574"/>
    </location>
</feature>
<feature type="strand" evidence="8">
    <location>
        <begin position="576"/>
        <end position="581"/>
    </location>
</feature>
<feature type="strand" evidence="8">
    <location>
        <begin position="599"/>
        <end position="602"/>
    </location>
</feature>
<feature type="helix" evidence="8">
    <location>
        <begin position="603"/>
        <end position="606"/>
    </location>
</feature>
<feature type="helix" evidence="8">
    <location>
        <begin position="607"/>
        <end position="609"/>
    </location>
</feature>
<feature type="strand" evidence="8">
    <location>
        <begin position="614"/>
        <end position="616"/>
    </location>
</feature>
<feature type="strand" evidence="8">
    <location>
        <begin position="618"/>
        <end position="628"/>
    </location>
</feature>
<feature type="helix" evidence="8">
    <location>
        <begin position="632"/>
        <end position="634"/>
    </location>
</feature>
<feature type="strand" evidence="8">
    <location>
        <begin position="635"/>
        <end position="637"/>
    </location>
</feature>
<feature type="strand" evidence="8">
    <location>
        <begin position="641"/>
        <end position="644"/>
    </location>
</feature>
<feature type="strand" evidence="8">
    <location>
        <begin position="646"/>
        <end position="651"/>
    </location>
</feature>
<feature type="strand" evidence="8">
    <location>
        <begin position="653"/>
        <end position="655"/>
    </location>
</feature>
<feature type="turn" evidence="8">
    <location>
        <begin position="657"/>
        <end position="660"/>
    </location>
</feature>
<comment type="catalytic activity">
    <reaction evidence="1">
        <text>a primary methyl amine + O2 + H2O = an aldehyde + H2O2 + NH4(+)</text>
        <dbReference type="Rhea" id="RHEA:16153"/>
        <dbReference type="ChEBI" id="CHEBI:15377"/>
        <dbReference type="ChEBI" id="CHEBI:15379"/>
        <dbReference type="ChEBI" id="CHEBI:16240"/>
        <dbReference type="ChEBI" id="CHEBI:17478"/>
        <dbReference type="ChEBI" id="CHEBI:28938"/>
        <dbReference type="ChEBI" id="CHEBI:228804"/>
        <dbReference type="EC" id="1.4.3.21"/>
    </reaction>
</comment>
<comment type="cofactor">
    <cofactor evidence="5">
        <name>Cu cation</name>
        <dbReference type="ChEBI" id="CHEBI:23378"/>
    </cofactor>
    <text evidence="5">Binds 1 copper ion per subunit.</text>
</comment>
<comment type="cofactor">
    <cofactor evidence="5">
        <name>Mn(2+)</name>
        <dbReference type="ChEBI" id="CHEBI:29035"/>
    </cofactor>
    <text evidence="5">Binds 1 Mn(2+) ion per subunit.</text>
</comment>
<comment type="cofactor">
    <cofactor evidence="5">
        <name>L-topaquinone</name>
        <dbReference type="ChEBI" id="CHEBI:79027"/>
    </cofactor>
    <text evidence="5">Contains 1 topaquinone per subunit.</text>
</comment>
<comment type="subunit">
    <text evidence="5">Homodimer.</text>
</comment>
<comment type="PTM">
    <text evidence="5">Topaquinone (TPQ) is generated by copper-dependent autoxidation of a specific tyrosyl residue.</text>
</comment>
<comment type="similarity">
    <text evidence="6">Belongs to the copper/topaquinone oxidase family.</text>
</comment>
<organism>
    <name type="scientific">Pisum sativum</name>
    <name type="common">Garden pea</name>
    <name type="synonym">Lathyrus oleraceus</name>
    <dbReference type="NCBI Taxonomy" id="3888"/>
    <lineage>
        <taxon>Eukaryota</taxon>
        <taxon>Viridiplantae</taxon>
        <taxon>Streptophyta</taxon>
        <taxon>Embryophyta</taxon>
        <taxon>Tracheophyta</taxon>
        <taxon>Spermatophyta</taxon>
        <taxon>Magnoliopsida</taxon>
        <taxon>eudicotyledons</taxon>
        <taxon>Gunneridae</taxon>
        <taxon>Pentapetalae</taxon>
        <taxon>rosids</taxon>
        <taxon>fabids</taxon>
        <taxon>Fabales</taxon>
        <taxon>Fabaceae</taxon>
        <taxon>Papilionoideae</taxon>
        <taxon>50 kb inversion clade</taxon>
        <taxon>NPAAA clade</taxon>
        <taxon>Hologalegina</taxon>
        <taxon>IRL clade</taxon>
        <taxon>Fabeae</taxon>
        <taxon>Pisum</taxon>
    </lineage>
</organism>
<accession>Q43077</accession>
<keyword id="KW-0002">3D-structure</keyword>
<keyword id="KW-0186">Copper</keyword>
<keyword id="KW-1015">Disulfide bond</keyword>
<keyword id="KW-0325">Glycoprotein</keyword>
<keyword id="KW-0464">Manganese</keyword>
<keyword id="KW-0479">Metal-binding</keyword>
<keyword id="KW-0560">Oxidoreductase</keyword>
<keyword id="KW-0732">Signal</keyword>
<keyword id="KW-0801">TPQ</keyword>
<name>AMO_PEA</name>
<reference key="1">
    <citation type="submission" date="1995-03" db="EMBL/GenBank/DDBJ databases">
        <authorList>
            <person name="Tipping A.J."/>
            <person name="McPherson M.J."/>
        </authorList>
    </citation>
    <scope>NUCLEOTIDE SEQUENCE [GENOMIC DNA]</scope>
</reference>
<reference key="2">
    <citation type="journal article" date="1996" name="Structure">
        <title>Crystal structure of a eukaryotic (pea seedling) copper-containing amine oxidase at 2.2-A resolution.</title>
        <authorList>
            <person name="Kumar V."/>
            <person name="Dooley D.M."/>
            <person name="Freeman H.C."/>
            <person name="Guss J.M."/>
            <person name="Harvey I."/>
            <person name="McGuirl M.A."/>
            <person name="Wilce M.C."/>
            <person name="Zubak V.M."/>
        </authorList>
    </citation>
    <scope>X-RAY CRYSTALLOGRAPHY (2.20 ANGSTROMS) OF 31-672 IN COMPLEX WITH COPPER AND MANGANESE</scope>
    <scope>TOPAQUINONE AT TYR-412</scope>
    <scope>GLYCOSYLATION AT ASN-156</scope>
    <scope>DISULFIDE BOND</scope>
    <scope>SUBUNIT</scope>
    <source>
        <tissue>Seedling</tissue>
    </source>
</reference>
<dbReference type="EC" id="1.4.3.21" evidence="1"/>
<dbReference type="EMBL" id="L39931">
    <property type="protein sequence ID" value="AAA62490.1"/>
    <property type="molecule type" value="Genomic_DNA"/>
</dbReference>
<dbReference type="PIR" id="A57327">
    <property type="entry name" value="C44239"/>
</dbReference>
<dbReference type="PDB" id="1KSI">
    <property type="method" value="X-ray"/>
    <property type="resolution" value="2.20 A"/>
    <property type="chains" value="A/B=31-672"/>
</dbReference>
<dbReference type="PDB" id="1W2Z">
    <property type="method" value="X-ray"/>
    <property type="resolution" value="2.24 A"/>
    <property type="chains" value="A/B/C/D=26-674"/>
</dbReference>
<dbReference type="PDBsum" id="1KSI"/>
<dbReference type="PDBsum" id="1W2Z"/>
<dbReference type="SMR" id="Q43077"/>
<dbReference type="BindingDB" id="Q43077"/>
<dbReference type="ChEMBL" id="CHEMBL5534"/>
<dbReference type="iPTMnet" id="Q43077"/>
<dbReference type="KEGG" id="ag:AAA62490"/>
<dbReference type="BRENDA" id="1.4.3.21">
    <property type="organism ID" value="4872"/>
</dbReference>
<dbReference type="SABIO-RK" id="Q43077"/>
<dbReference type="EvolutionaryTrace" id="Q43077"/>
<dbReference type="GO" id="GO:0005507">
    <property type="term" value="F:copper ion binding"/>
    <property type="evidence" value="ECO:0007669"/>
    <property type="project" value="InterPro"/>
</dbReference>
<dbReference type="GO" id="GO:0052597">
    <property type="term" value="F:diamine oxidase activity"/>
    <property type="evidence" value="ECO:0000314"/>
    <property type="project" value="UniProtKB"/>
</dbReference>
<dbReference type="GO" id="GO:0008131">
    <property type="term" value="F:primary methylamine oxidase activity"/>
    <property type="evidence" value="ECO:0007669"/>
    <property type="project" value="UniProtKB-EC"/>
</dbReference>
<dbReference type="GO" id="GO:0048038">
    <property type="term" value="F:quinone binding"/>
    <property type="evidence" value="ECO:0007669"/>
    <property type="project" value="InterPro"/>
</dbReference>
<dbReference type="GO" id="GO:0009308">
    <property type="term" value="P:amine metabolic process"/>
    <property type="evidence" value="ECO:0007669"/>
    <property type="project" value="InterPro"/>
</dbReference>
<dbReference type="FunFam" id="2.70.98.20:FF:000004">
    <property type="entry name" value="Amine oxidase"/>
    <property type="match status" value="1"/>
</dbReference>
<dbReference type="FunFam" id="3.10.450.40:FF:000005">
    <property type="entry name" value="Amine oxidase"/>
    <property type="match status" value="1"/>
</dbReference>
<dbReference type="FunFam" id="3.10.450.40:FF:000012">
    <property type="entry name" value="Amine oxidase"/>
    <property type="match status" value="1"/>
</dbReference>
<dbReference type="Gene3D" id="3.10.450.40">
    <property type="match status" value="2"/>
</dbReference>
<dbReference type="Gene3D" id="2.70.98.20">
    <property type="entry name" value="Copper amine oxidase, catalytic domain"/>
    <property type="match status" value="1"/>
</dbReference>
<dbReference type="InterPro" id="IPR049948">
    <property type="entry name" value="Cu_Am_ox_TPQ-bd"/>
</dbReference>
<dbReference type="InterPro" id="IPR000269">
    <property type="entry name" value="Cu_amine_oxidase"/>
</dbReference>
<dbReference type="InterPro" id="IPR015798">
    <property type="entry name" value="Cu_amine_oxidase_C"/>
</dbReference>
<dbReference type="InterPro" id="IPR036460">
    <property type="entry name" value="Cu_amine_oxidase_C_sf"/>
</dbReference>
<dbReference type="InterPro" id="IPR016182">
    <property type="entry name" value="Cu_amine_oxidase_N-reg"/>
</dbReference>
<dbReference type="InterPro" id="IPR015800">
    <property type="entry name" value="Cu_amine_oxidase_N2"/>
</dbReference>
<dbReference type="InterPro" id="IPR015802">
    <property type="entry name" value="Cu_amine_oxidase_N3"/>
</dbReference>
<dbReference type="PANTHER" id="PTHR10638:SF68">
    <property type="entry name" value="AMINE OXIDASE"/>
    <property type="match status" value="1"/>
</dbReference>
<dbReference type="PANTHER" id="PTHR10638">
    <property type="entry name" value="COPPER AMINE OXIDASE"/>
    <property type="match status" value="1"/>
</dbReference>
<dbReference type="Pfam" id="PF01179">
    <property type="entry name" value="Cu_amine_oxid"/>
    <property type="match status" value="1"/>
</dbReference>
<dbReference type="Pfam" id="PF02727">
    <property type="entry name" value="Cu_amine_oxidN2"/>
    <property type="match status" value="1"/>
</dbReference>
<dbReference type="Pfam" id="PF02728">
    <property type="entry name" value="Cu_amine_oxidN3"/>
    <property type="match status" value="1"/>
</dbReference>
<dbReference type="SUPFAM" id="SSF49998">
    <property type="entry name" value="Amine oxidase catalytic domain"/>
    <property type="match status" value="1"/>
</dbReference>
<dbReference type="SUPFAM" id="SSF54416">
    <property type="entry name" value="Amine oxidase N-terminal region"/>
    <property type="match status" value="2"/>
</dbReference>
<dbReference type="PROSITE" id="PS01164">
    <property type="entry name" value="COPPER_AMINE_OXID_1"/>
    <property type="match status" value="1"/>
</dbReference>
<proteinExistence type="evidence at protein level"/>
<protein>
    <recommendedName>
        <fullName>Primary amine oxidase</fullName>
        <ecNumber evidence="1">1.4.3.21</ecNumber>
    </recommendedName>
    <alternativeName>
        <fullName>Amine oxidase [copper-containing]</fullName>
    </alternativeName>
</protein>